<protein>
    <recommendedName>
        <fullName evidence="1">6,7-dimethyl-8-ribityllumazine synthase</fullName>
        <shortName evidence="1">DMRL synthase</shortName>
        <shortName evidence="1">LS</shortName>
        <shortName evidence="1">Lumazine synthase</shortName>
        <ecNumber evidence="1">2.5.1.78</ecNumber>
    </recommendedName>
</protein>
<dbReference type="EC" id="2.5.1.78" evidence="1"/>
<dbReference type="EMBL" id="FM211192">
    <property type="protein sequence ID" value="CAR70653.1"/>
    <property type="molecule type" value="Genomic_DNA"/>
</dbReference>
<dbReference type="PDB" id="4J07">
    <property type="method" value="X-ray"/>
    <property type="resolution" value="1.95 A"/>
    <property type="chains" value="A/B/C/D/E=1-160"/>
</dbReference>
<dbReference type="PDBsum" id="4J07"/>
<dbReference type="SMR" id="B8ZUN3"/>
<dbReference type="KEGG" id="mlb:MLBr00560"/>
<dbReference type="HOGENOM" id="CLU_089358_1_2_11"/>
<dbReference type="UniPathway" id="UPA00275">
    <property type="reaction ID" value="UER00404"/>
</dbReference>
<dbReference type="EvolutionaryTrace" id="B8ZUN3"/>
<dbReference type="Proteomes" id="UP000006900">
    <property type="component" value="Chromosome"/>
</dbReference>
<dbReference type="GO" id="GO:0005829">
    <property type="term" value="C:cytosol"/>
    <property type="evidence" value="ECO:0007669"/>
    <property type="project" value="TreeGrafter"/>
</dbReference>
<dbReference type="GO" id="GO:0009349">
    <property type="term" value="C:riboflavin synthase complex"/>
    <property type="evidence" value="ECO:0007669"/>
    <property type="project" value="InterPro"/>
</dbReference>
<dbReference type="GO" id="GO:0000906">
    <property type="term" value="F:6,7-dimethyl-8-ribityllumazine synthase activity"/>
    <property type="evidence" value="ECO:0007669"/>
    <property type="project" value="UniProtKB-UniRule"/>
</dbReference>
<dbReference type="GO" id="GO:0009231">
    <property type="term" value="P:riboflavin biosynthetic process"/>
    <property type="evidence" value="ECO:0007669"/>
    <property type="project" value="UniProtKB-UniRule"/>
</dbReference>
<dbReference type="CDD" id="cd09209">
    <property type="entry name" value="Lumazine_synthase-I"/>
    <property type="match status" value="1"/>
</dbReference>
<dbReference type="Gene3D" id="3.40.50.960">
    <property type="entry name" value="Lumazine/riboflavin synthase"/>
    <property type="match status" value="1"/>
</dbReference>
<dbReference type="HAMAP" id="MF_00178">
    <property type="entry name" value="Lumazine_synth"/>
    <property type="match status" value="1"/>
</dbReference>
<dbReference type="InterPro" id="IPR034964">
    <property type="entry name" value="LS"/>
</dbReference>
<dbReference type="InterPro" id="IPR002180">
    <property type="entry name" value="LS/RS"/>
</dbReference>
<dbReference type="InterPro" id="IPR036467">
    <property type="entry name" value="LS/RS_sf"/>
</dbReference>
<dbReference type="NCBIfam" id="TIGR00114">
    <property type="entry name" value="lumazine-synth"/>
    <property type="match status" value="1"/>
</dbReference>
<dbReference type="PANTHER" id="PTHR21058:SF0">
    <property type="entry name" value="6,7-DIMETHYL-8-RIBITYLLUMAZINE SYNTHASE"/>
    <property type="match status" value="1"/>
</dbReference>
<dbReference type="PANTHER" id="PTHR21058">
    <property type="entry name" value="6,7-DIMETHYL-8-RIBITYLLUMAZINE SYNTHASE DMRL SYNTHASE LUMAZINE SYNTHASE"/>
    <property type="match status" value="1"/>
</dbReference>
<dbReference type="Pfam" id="PF00885">
    <property type="entry name" value="DMRL_synthase"/>
    <property type="match status" value="1"/>
</dbReference>
<dbReference type="SUPFAM" id="SSF52121">
    <property type="entry name" value="Lumazine synthase"/>
    <property type="match status" value="1"/>
</dbReference>
<keyword id="KW-0002">3D-structure</keyword>
<keyword id="KW-0686">Riboflavin biosynthesis</keyword>
<keyword id="KW-0808">Transferase</keyword>
<sequence>MSGGAGIPEVPGIDASGLRLGIVASTWHSRICDALLAGARKVAADSGIDGPTVVRVLGAIEIPVVVQELARHHDAVVALGVVIRGDTPHFDYVCNSVTQGLTRIALDTSTPVGNGVLTTNTEKQALDRAGLPTSAEDKGAQAAAAALTTALTLLNLRSRI</sequence>
<gene>
    <name evidence="1" type="primary">ribH</name>
    <name type="ordered locus">MLBr00560</name>
</gene>
<organism>
    <name type="scientific">Mycobacterium leprae (strain Br4923)</name>
    <dbReference type="NCBI Taxonomy" id="561304"/>
    <lineage>
        <taxon>Bacteria</taxon>
        <taxon>Bacillati</taxon>
        <taxon>Actinomycetota</taxon>
        <taxon>Actinomycetes</taxon>
        <taxon>Mycobacteriales</taxon>
        <taxon>Mycobacteriaceae</taxon>
        <taxon>Mycobacterium</taxon>
    </lineage>
</organism>
<name>RISB_MYCLB</name>
<accession>B8ZUN3</accession>
<reference key="1">
    <citation type="journal article" date="2009" name="Nat. Genet.">
        <title>Comparative genomic and phylogeographic analysis of Mycobacterium leprae.</title>
        <authorList>
            <person name="Monot M."/>
            <person name="Honore N."/>
            <person name="Garnier T."/>
            <person name="Zidane N."/>
            <person name="Sherafi D."/>
            <person name="Paniz-Mondolfi A."/>
            <person name="Matsuoka M."/>
            <person name="Taylor G.M."/>
            <person name="Donoghue H.D."/>
            <person name="Bouwman A."/>
            <person name="Mays S."/>
            <person name="Watson C."/>
            <person name="Lockwood D."/>
            <person name="Khamispour A."/>
            <person name="Dowlati Y."/>
            <person name="Jianping S."/>
            <person name="Rea T.H."/>
            <person name="Vera-Cabrera L."/>
            <person name="Stefani M.M."/>
            <person name="Banu S."/>
            <person name="Macdonald M."/>
            <person name="Sapkota B.R."/>
            <person name="Spencer J.S."/>
            <person name="Thomas J."/>
            <person name="Harshman K."/>
            <person name="Singh P."/>
            <person name="Busso P."/>
            <person name="Gattiker A."/>
            <person name="Rougemont J."/>
            <person name="Brennan P.J."/>
            <person name="Cole S.T."/>
        </authorList>
    </citation>
    <scope>NUCLEOTIDE SEQUENCE [LARGE SCALE GENOMIC DNA]</scope>
    <source>
        <strain>Br4923</strain>
    </source>
</reference>
<proteinExistence type="evidence at protein level"/>
<comment type="function">
    <text evidence="1">Catalyzes the formation of 6,7-dimethyl-8-ribityllumazine by condensation of 5-amino-6-(D-ribitylamino)uracil with 3,4-dihydroxy-2-butanone 4-phosphate. This is the penultimate step in the biosynthesis of riboflavin.</text>
</comment>
<comment type="catalytic activity">
    <reaction evidence="1">
        <text>(2S)-2-hydroxy-3-oxobutyl phosphate + 5-amino-6-(D-ribitylamino)uracil = 6,7-dimethyl-8-(1-D-ribityl)lumazine + phosphate + 2 H2O + H(+)</text>
        <dbReference type="Rhea" id="RHEA:26152"/>
        <dbReference type="ChEBI" id="CHEBI:15377"/>
        <dbReference type="ChEBI" id="CHEBI:15378"/>
        <dbReference type="ChEBI" id="CHEBI:15934"/>
        <dbReference type="ChEBI" id="CHEBI:43474"/>
        <dbReference type="ChEBI" id="CHEBI:58201"/>
        <dbReference type="ChEBI" id="CHEBI:58830"/>
        <dbReference type="EC" id="2.5.1.78"/>
    </reaction>
</comment>
<comment type="pathway">
    <text evidence="1">Cofactor biosynthesis; riboflavin biosynthesis; riboflavin from 2-hydroxy-3-oxobutyl phosphate and 5-amino-6-(D-ribitylamino)uracil: step 1/2.</text>
</comment>
<comment type="subunit">
    <text evidence="1">Homopentamer.</text>
</comment>
<comment type="similarity">
    <text evidence="1">Belongs to the DMRL synthase family.</text>
</comment>
<feature type="chain" id="PRO_1000195504" description="6,7-dimethyl-8-ribityllumazine synthase">
    <location>
        <begin position="1"/>
        <end position="160"/>
    </location>
</feature>
<feature type="active site" description="Proton donor" evidence="1">
    <location>
        <position position="89"/>
    </location>
</feature>
<feature type="binding site" evidence="1">
    <location>
        <position position="27"/>
    </location>
    <ligand>
        <name>5-amino-6-(D-ribitylamino)uracil</name>
        <dbReference type="ChEBI" id="CHEBI:15934"/>
    </ligand>
</feature>
<feature type="binding site" evidence="1">
    <location>
        <begin position="59"/>
        <end position="61"/>
    </location>
    <ligand>
        <name>5-amino-6-(D-ribitylamino)uracil</name>
        <dbReference type="ChEBI" id="CHEBI:15934"/>
    </ligand>
</feature>
<feature type="binding site" evidence="1">
    <location>
        <begin position="81"/>
        <end position="83"/>
    </location>
    <ligand>
        <name>5-amino-6-(D-ribitylamino)uracil</name>
        <dbReference type="ChEBI" id="CHEBI:15934"/>
    </ligand>
</feature>
<feature type="binding site" evidence="1">
    <location>
        <begin position="86"/>
        <end position="87"/>
    </location>
    <ligand>
        <name>(2S)-2-hydroxy-3-oxobutyl phosphate</name>
        <dbReference type="ChEBI" id="CHEBI:58830"/>
    </ligand>
</feature>
<feature type="binding site" evidence="1">
    <location>
        <position position="114"/>
    </location>
    <ligand>
        <name>5-amino-6-(D-ribitylamino)uracil</name>
        <dbReference type="ChEBI" id="CHEBI:15934"/>
    </ligand>
</feature>
<feature type="binding site" evidence="1">
    <location>
        <position position="128"/>
    </location>
    <ligand>
        <name>(2S)-2-hydroxy-3-oxobutyl phosphate</name>
        <dbReference type="ChEBI" id="CHEBI:58830"/>
    </ligand>
</feature>
<feature type="strand" evidence="2">
    <location>
        <begin position="20"/>
        <end position="24"/>
    </location>
</feature>
<feature type="helix" evidence="2">
    <location>
        <begin position="29"/>
        <end position="45"/>
    </location>
</feature>
<feature type="strand" evidence="2">
    <location>
        <begin position="52"/>
        <end position="55"/>
    </location>
</feature>
<feature type="helix" evidence="2">
    <location>
        <begin position="59"/>
        <end position="61"/>
    </location>
</feature>
<feature type="helix" evidence="2">
    <location>
        <begin position="62"/>
        <end position="70"/>
    </location>
</feature>
<feature type="strand" evidence="2">
    <location>
        <begin position="74"/>
        <end position="83"/>
    </location>
</feature>
<feature type="helix" evidence="2">
    <location>
        <begin position="89"/>
        <end position="108"/>
    </location>
</feature>
<feature type="strand" evidence="2">
    <location>
        <begin position="112"/>
        <end position="121"/>
    </location>
</feature>
<feature type="helix" evidence="2">
    <location>
        <begin position="122"/>
        <end position="126"/>
    </location>
</feature>
<feature type="helix" evidence="2">
    <location>
        <begin position="138"/>
        <end position="157"/>
    </location>
</feature>
<evidence type="ECO:0000255" key="1">
    <source>
        <dbReference type="HAMAP-Rule" id="MF_00178"/>
    </source>
</evidence>
<evidence type="ECO:0007829" key="2">
    <source>
        <dbReference type="PDB" id="4J07"/>
    </source>
</evidence>